<feature type="chain" id="PRO_1000091856" description="3-deoxy-manno-octulosonate cytidylyltransferase">
    <location>
        <begin position="1"/>
        <end position="242"/>
    </location>
</feature>
<sequence length="242" mass="25576">MRHVAVIIPARYGATRFPGKPLADLAGKPLIAHVVERAQRARGVDVVAVATDDDRIVRAVRAAGGEAILTGPAATGTDRVAEAARKLAPRPEIVVNLQGDEPLIEPEAIEAVIGAMAGGARMATLARPLAEGELERTQVVKVVTRASGDALYFSRAPIPHRRAGGESPLARAHVGIYAFTAEFLETFTALAPGRLEGEEALEQLRALEHGYDIRVADTGYRGFGIDTPDDLERARALLAAGA</sequence>
<dbReference type="EC" id="2.7.7.38" evidence="1"/>
<dbReference type="EMBL" id="CP000251">
    <property type="protein sequence ID" value="ABC83939.1"/>
    <property type="molecule type" value="Genomic_DNA"/>
</dbReference>
<dbReference type="RefSeq" id="WP_011423221.1">
    <property type="nucleotide sequence ID" value="NC_007760.1"/>
</dbReference>
<dbReference type="SMR" id="Q2IH80"/>
<dbReference type="STRING" id="290397.Adeh_4175"/>
<dbReference type="KEGG" id="ade:Adeh_4175"/>
<dbReference type="eggNOG" id="COG1212">
    <property type="taxonomic scope" value="Bacteria"/>
</dbReference>
<dbReference type="HOGENOM" id="CLU_065038_0_1_7"/>
<dbReference type="OrthoDB" id="9815559at2"/>
<dbReference type="UniPathway" id="UPA00030"/>
<dbReference type="UniPathway" id="UPA00358">
    <property type="reaction ID" value="UER00476"/>
</dbReference>
<dbReference type="Proteomes" id="UP000001935">
    <property type="component" value="Chromosome"/>
</dbReference>
<dbReference type="GO" id="GO:0005829">
    <property type="term" value="C:cytosol"/>
    <property type="evidence" value="ECO:0007669"/>
    <property type="project" value="TreeGrafter"/>
</dbReference>
<dbReference type="GO" id="GO:0008690">
    <property type="term" value="F:3-deoxy-manno-octulosonate cytidylyltransferase activity"/>
    <property type="evidence" value="ECO:0007669"/>
    <property type="project" value="UniProtKB-UniRule"/>
</dbReference>
<dbReference type="GO" id="GO:0033468">
    <property type="term" value="P:CMP-keto-3-deoxy-D-manno-octulosonic acid biosynthetic process"/>
    <property type="evidence" value="ECO:0007669"/>
    <property type="project" value="UniProtKB-UniRule"/>
</dbReference>
<dbReference type="GO" id="GO:0009103">
    <property type="term" value="P:lipopolysaccharide biosynthetic process"/>
    <property type="evidence" value="ECO:0007669"/>
    <property type="project" value="UniProtKB-UniRule"/>
</dbReference>
<dbReference type="CDD" id="cd02517">
    <property type="entry name" value="CMP-KDO-Synthetase"/>
    <property type="match status" value="1"/>
</dbReference>
<dbReference type="FunFam" id="3.90.550.10:FF:000011">
    <property type="entry name" value="3-deoxy-manno-octulosonate cytidylyltransferase"/>
    <property type="match status" value="1"/>
</dbReference>
<dbReference type="Gene3D" id="3.90.550.10">
    <property type="entry name" value="Spore Coat Polysaccharide Biosynthesis Protein SpsA, Chain A"/>
    <property type="match status" value="1"/>
</dbReference>
<dbReference type="HAMAP" id="MF_00057">
    <property type="entry name" value="KdsB"/>
    <property type="match status" value="1"/>
</dbReference>
<dbReference type="InterPro" id="IPR003329">
    <property type="entry name" value="Cytidylyl_trans"/>
</dbReference>
<dbReference type="InterPro" id="IPR004528">
    <property type="entry name" value="KdsB"/>
</dbReference>
<dbReference type="InterPro" id="IPR029044">
    <property type="entry name" value="Nucleotide-diphossugar_trans"/>
</dbReference>
<dbReference type="NCBIfam" id="TIGR00466">
    <property type="entry name" value="kdsB"/>
    <property type="match status" value="1"/>
</dbReference>
<dbReference type="NCBIfam" id="NF003950">
    <property type="entry name" value="PRK05450.1-3"/>
    <property type="match status" value="1"/>
</dbReference>
<dbReference type="NCBIfam" id="NF003952">
    <property type="entry name" value="PRK05450.1-5"/>
    <property type="match status" value="1"/>
</dbReference>
<dbReference type="NCBIfam" id="NF009905">
    <property type="entry name" value="PRK13368.1"/>
    <property type="match status" value="1"/>
</dbReference>
<dbReference type="PANTHER" id="PTHR42866">
    <property type="entry name" value="3-DEOXY-MANNO-OCTULOSONATE CYTIDYLYLTRANSFERASE"/>
    <property type="match status" value="1"/>
</dbReference>
<dbReference type="PANTHER" id="PTHR42866:SF2">
    <property type="entry name" value="3-DEOXY-MANNO-OCTULOSONATE CYTIDYLYLTRANSFERASE, MITOCHONDRIAL"/>
    <property type="match status" value="1"/>
</dbReference>
<dbReference type="Pfam" id="PF02348">
    <property type="entry name" value="CTP_transf_3"/>
    <property type="match status" value="1"/>
</dbReference>
<dbReference type="SUPFAM" id="SSF53448">
    <property type="entry name" value="Nucleotide-diphospho-sugar transferases"/>
    <property type="match status" value="1"/>
</dbReference>
<comment type="function">
    <text evidence="1">Activates KDO (a required 8-carbon sugar) for incorporation into bacterial lipopolysaccharide in Gram-negative bacteria.</text>
</comment>
<comment type="catalytic activity">
    <reaction evidence="1">
        <text>3-deoxy-alpha-D-manno-oct-2-ulosonate + CTP = CMP-3-deoxy-beta-D-manno-octulosonate + diphosphate</text>
        <dbReference type="Rhea" id="RHEA:23448"/>
        <dbReference type="ChEBI" id="CHEBI:33019"/>
        <dbReference type="ChEBI" id="CHEBI:37563"/>
        <dbReference type="ChEBI" id="CHEBI:85986"/>
        <dbReference type="ChEBI" id="CHEBI:85987"/>
        <dbReference type="EC" id="2.7.7.38"/>
    </reaction>
</comment>
<comment type="pathway">
    <text evidence="1">Nucleotide-sugar biosynthesis; CMP-3-deoxy-D-manno-octulosonate biosynthesis; CMP-3-deoxy-D-manno-octulosonate from 3-deoxy-D-manno-octulosonate and CTP: step 1/1.</text>
</comment>
<comment type="pathway">
    <text evidence="1">Bacterial outer membrane biogenesis; lipopolysaccharide biosynthesis.</text>
</comment>
<comment type="subcellular location">
    <subcellularLocation>
        <location evidence="1">Cytoplasm</location>
    </subcellularLocation>
</comment>
<comment type="similarity">
    <text evidence="1">Belongs to the KdsB family.</text>
</comment>
<reference key="1">
    <citation type="submission" date="2006-01" db="EMBL/GenBank/DDBJ databases">
        <title>Complete sequence of Anaeromyxobacter dehalogenans 2CP-C.</title>
        <authorList>
            <person name="Copeland A."/>
            <person name="Lucas S."/>
            <person name="Lapidus A."/>
            <person name="Barry K."/>
            <person name="Detter J.C."/>
            <person name="Glavina T."/>
            <person name="Hammon N."/>
            <person name="Israni S."/>
            <person name="Pitluck S."/>
            <person name="Brettin T."/>
            <person name="Bruce D."/>
            <person name="Han C."/>
            <person name="Tapia R."/>
            <person name="Gilna P."/>
            <person name="Kiss H."/>
            <person name="Schmutz J."/>
            <person name="Larimer F."/>
            <person name="Land M."/>
            <person name="Kyrpides N."/>
            <person name="Anderson I."/>
            <person name="Sanford R.A."/>
            <person name="Ritalahti K.M."/>
            <person name="Thomas H.S."/>
            <person name="Kirby J.R."/>
            <person name="Zhulin I.B."/>
            <person name="Loeffler F.E."/>
            <person name="Richardson P."/>
        </authorList>
    </citation>
    <scope>NUCLEOTIDE SEQUENCE [LARGE SCALE GENOMIC DNA]</scope>
    <source>
        <strain>2CP-C</strain>
    </source>
</reference>
<gene>
    <name evidence="1" type="primary">kdsB</name>
    <name type="ordered locus">Adeh_4175</name>
</gene>
<keyword id="KW-0963">Cytoplasm</keyword>
<keyword id="KW-0448">Lipopolysaccharide biosynthesis</keyword>
<keyword id="KW-0548">Nucleotidyltransferase</keyword>
<keyword id="KW-1185">Reference proteome</keyword>
<keyword id="KW-0808">Transferase</keyword>
<accession>Q2IH80</accession>
<name>KDSB_ANADE</name>
<proteinExistence type="inferred from homology"/>
<evidence type="ECO:0000255" key="1">
    <source>
        <dbReference type="HAMAP-Rule" id="MF_00057"/>
    </source>
</evidence>
<protein>
    <recommendedName>
        <fullName evidence="1">3-deoxy-manno-octulosonate cytidylyltransferase</fullName>
        <ecNumber evidence="1">2.7.7.38</ecNumber>
    </recommendedName>
    <alternativeName>
        <fullName evidence="1">CMP-2-keto-3-deoxyoctulosonic acid synthase</fullName>
        <shortName evidence="1">CKS</shortName>
        <shortName evidence="1">CMP-KDO synthase</shortName>
    </alternativeName>
</protein>
<organism>
    <name type="scientific">Anaeromyxobacter dehalogenans (strain 2CP-C)</name>
    <dbReference type="NCBI Taxonomy" id="290397"/>
    <lineage>
        <taxon>Bacteria</taxon>
        <taxon>Pseudomonadati</taxon>
        <taxon>Myxococcota</taxon>
        <taxon>Myxococcia</taxon>
        <taxon>Myxococcales</taxon>
        <taxon>Cystobacterineae</taxon>
        <taxon>Anaeromyxobacteraceae</taxon>
        <taxon>Anaeromyxobacter</taxon>
    </lineage>
</organism>